<accession>B1IRR7</accession>
<gene>
    <name evidence="1" type="primary">glgS</name>
    <name type="ordered locus">EcolC_0650</name>
</gene>
<protein>
    <recommendedName>
        <fullName evidence="1">Surface composition regulator</fullName>
    </recommendedName>
</protein>
<reference key="1">
    <citation type="submission" date="2008-02" db="EMBL/GenBank/DDBJ databases">
        <title>Complete sequence of Escherichia coli C str. ATCC 8739.</title>
        <authorList>
            <person name="Copeland A."/>
            <person name="Lucas S."/>
            <person name="Lapidus A."/>
            <person name="Glavina del Rio T."/>
            <person name="Dalin E."/>
            <person name="Tice H."/>
            <person name="Bruce D."/>
            <person name="Goodwin L."/>
            <person name="Pitluck S."/>
            <person name="Kiss H."/>
            <person name="Brettin T."/>
            <person name="Detter J.C."/>
            <person name="Han C."/>
            <person name="Kuske C.R."/>
            <person name="Schmutz J."/>
            <person name="Larimer F."/>
            <person name="Land M."/>
            <person name="Hauser L."/>
            <person name="Kyrpides N."/>
            <person name="Mikhailova N."/>
            <person name="Ingram L."/>
            <person name="Richardson P."/>
        </authorList>
    </citation>
    <scope>NUCLEOTIDE SEQUENCE [LARGE SCALE GENOMIC DNA]</scope>
    <source>
        <strain>ATCC 8739 / DSM 1576 / NBRC 3972 / NCIMB 8545 / WDCM 00012 / Crooks</strain>
    </source>
</reference>
<proteinExistence type="inferred from homology"/>
<feature type="chain" id="PRO_1000081699" description="Surface composition regulator">
    <location>
        <begin position="1"/>
        <end position="66"/>
    </location>
</feature>
<comment type="function">
    <text evidence="1">Major determinant of cell surface composition. Negatively regulates motility, adhesion and synthesis of biofilm exopolysaccharides.</text>
</comment>
<comment type="similarity">
    <text evidence="1">Belongs to the GlgS family.</text>
</comment>
<name>GLGS_ECOLC</name>
<dbReference type="EMBL" id="CP000946">
    <property type="protein sequence ID" value="ACA76326.1"/>
    <property type="molecule type" value="Genomic_DNA"/>
</dbReference>
<dbReference type="RefSeq" id="WP_000350095.1">
    <property type="nucleotide sequence ID" value="NZ_MTFT01000027.1"/>
</dbReference>
<dbReference type="BMRB" id="B1IRR7"/>
<dbReference type="SMR" id="B1IRR7"/>
<dbReference type="GeneID" id="93778946"/>
<dbReference type="KEGG" id="ecl:EcolC_0650"/>
<dbReference type="HOGENOM" id="CLU_185971_0_0_6"/>
<dbReference type="GO" id="GO:1902201">
    <property type="term" value="P:negative regulation of bacterial-type flagellum-dependent cell motility"/>
    <property type="evidence" value="ECO:0007669"/>
    <property type="project" value="UniProtKB-UniRule"/>
</dbReference>
<dbReference type="GO" id="GO:1900191">
    <property type="term" value="P:negative regulation of single-species biofilm formation"/>
    <property type="evidence" value="ECO:0007669"/>
    <property type="project" value="UniProtKB-UniRule"/>
</dbReference>
<dbReference type="FunFam" id="1.20.970.20:FF:000001">
    <property type="entry name" value="Surface composition regulator"/>
    <property type="match status" value="1"/>
</dbReference>
<dbReference type="Gene3D" id="1.20.970.20">
    <property type="entry name" value="Glycogen synthesis protein GlgS"/>
    <property type="match status" value="1"/>
</dbReference>
<dbReference type="HAMAP" id="MF_00525">
    <property type="entry name" value="GlgS"/>
    <property type="match status" value="1"/>
</dbReference>
<dbReference type="InterPro" id="IPR015065">
    <property type="entry name" value="GlgS"/>
</dbReference>
<dbReference type="InterPro" id="IPR036295">
    <property type="entry name" value="GlgS_sf"/>
</dbReference>
<dbReference type="NCBIfam" id="NF002793">
    <property type="entry name" value="PRK02922.1"/>
    <property type="match status" value="1"/>
</dbReference>
<dbReference type="Pfam" id="PF08971">
    <property type="entry name" value="GlgS"/>
    <property type="match status" value="1"/>
</dbReference>
<dbReference type="SUPFAM" id="SSF109747">
    <property type="entry name" value="Glycogen synthesis protein GlgS"/>
    <property type="match status" value="1"/>
</dbReference>
<evidence type="ECO:0000255" key="1">
    <source>
        <dbReference type="HAMAP-Rule" id="MF_00525"/>
    </source>
</evidence>
<organism>
    <name type="scientific">Escherichia coli (strain ATCC 8739 / DSM 1576 / NBRC 3972 / NCIMB 8545 / WDCM 00012 / Crooks)</name>
    <dbReference type="NCBI Taxonomy" id="481805"/>
    <lineage>
        <taxon>Bacteria</taxon>
        <taxon>Pseudomonadati</taxon>
        <taxon>Pseudomonadota</taxon>
        <taxon>Gammaproteobacteria</taxon>
        <taxon>Enterobacterales</taxon>
        <taxon>Enterobacteriaceae</taxon>
        <taxon>Escherichia</taxon>
    </lineage>
</organism>
<sequence length="66" mass="7892">MDHSLNSLNNFDFLARSFARMHAEGRPVDILAVTGNMDEEHRTWFCARYAWYCQQMMQARELELEH</sequence>